<comment type="function">
    <text evidence="1">Part of the ABC transporter complex LsrABCD involved in autoinducer 2 (AI-2) import. Probably responsible for the translocation of the substrate across the membrane (By similarity).</text>
</comment>
<comment type="subunit">
    <text evidence="1">The complex is composed of two ATP-binding proteins (LsrA), two transmembrane proteins (LsrC and LsrD) and a solute-binding protein (LsrB).</text>
</comment>
<comment type="subcellular location">
    <subcellularLocation>
        <location evidence="1">Cell inner membrane</location>
        <topology evidence="1">Multi-pass membrane protein</topology>
    </subcellularLocation>
</comment>
<comment type="similarity">
    <text evidence="3">Belongs to the binding-protein-dependent transport system permease family. AraH/RbsC subfamily.</text>
</comment>
<protein>
    <recommendedName>
        <fullName>Autoinducer 2 import system permease protein LsrC</fullName>
        <shortName>AI-2 import system permease protein LsrC</shortName>
    </recommendedName>
</protein>
<dbReference type="EMBL" id="AE005174">
    <property type="protein sequence ID" value="AAG56252.1"/>
    <property type="molecule type" value="Genomic_DNA"/>
</dbReference>
<dbReference type="EMBL" id="BA000007">
    <property type="protein sequence ID" value="BAB35544.1"/>
    <property type="molecule type" value="Genomic_DNA"/>
</dbReference>
<dbReference type="PIR" id="A90894">
    <property type="entry name" value="A90894"/>
</dbReference>
<dbReference type="PIR" id="H85723">
    <property type="entry name" value="H85723"/>
</dbReference>
<dbReference type="RefSeq" id="NP_310148.1">
    <property type="nucleotide sequence ID" value="NC_002695.1"/>
</dbReference>
<dbReference type="RefSeq" id="WP_000911140.1">
    <property type="nucleotide sequence ID" value="NZ_VOAI01000024.1"/>
</dbReference>
<dbReference type="STRING" id="155864.Z2191"/>
<dbReference type="GeneID" id="917325"/>
<dbReference type="KEGG" id="ece:Z2191"/>
<dbReference type="KEGG" id="ecs:ECs_2121"/>
<dbReference type="PATRIC" id="fig|386585.9.peg.2227"/>
<dbReference type="eggNOG" id="COG1172">
    <property type="taxonomic scope" value="Bacteria"/>
</dbReference>
<dbReference type="HOGENOM" id="CLU_028880_0_1_6"/>
<dbReference type="OMA" id="FGRDFYA"/>
<dbReference type="Proteomes" id="UP000000558">
    <property type="component" value="Chromosome"/>
</dbReference>
<dbReference type="Proteomes" id="UP000002519">
    <property type="component" value="Chromosome"/>
</dbReference>
<dbReference type="GO" id="GO:0005886">
    <property type="term" value="C:plasma membrane"/>
    <property type="evidence" value="ECO:0007669"/>
    <property type="project" value="UniProtKB-SubCell"/>
</dbReference>
<dbReference type="GO" id="GO:0022857">
    <property type="term" value="F:transmembrane transporter activity"/>
    <property type="evidence" value="ECO:0007669"/>
    <property type="project" value="InterPro"/>
</dbReference>
<dbReference type="CDD" id="cd06579">
    <property type="entry name" value="TM_PBP1_transp_AraH_like"/>
    <property type="match status" value="1"/>
</dbReference>
<dbReference type="InterPro" id="IPR001851">
    <property type="entry name" value="ABC_transp_permease"/>
</dbReference>
<dbReference type="NCBIfam" id="NF011961">
    <property type="entry name" value="PRK15432.1"/>
    <property type="match status" value="1"/>
</dbReference>
<dbReference type="PANTHER" id="PTHR32196">
    <property type="entry name" value="ABC TRANSPORTER PERMEASE PROTEIN YPHD-RELATED-RELATED"/>
    <property type="match status" value="1"/>
</dbReference>
<dbReference type="PANTHER" id="PTHR32196:SF29">
    <property type="entry name" value="AUTOINDUCER 2 IMPORT SYSTEM PERMEASE PROTEIN LSRC"/>
    <property type="match status" value="1"/>
</dbReference>
<dbReference type="Pfam" id="PF02653">
    <property type="entry name" value="BPD_transp_2"/>
    <property type="match status" value="1"/>
</dbReference>
<gene>
    <name type="primary">lsrC</name>
    <name type="ordered locus">Z2191</name>
    <name type="ordered locus">ECs2121</name>
</gene>
<name>LSRC_ECO57</name>
<proteinExistence type="inferred from homology"/>
<sequence length="342" mass="36366">MLKFIQNNREITALLAVLLLFVLPGFLDRQYLSVQTLTMVYSSAQILILLAMGATLVMLTRNIDVSVGSITGMCAVLLGMLLNAGYSLPVACVATLLLGLLAGFFNGVLVAWLKIPAIVATLGTLGLYRGIMLLWTGGKWIEGLPAELKQLSAPLLLGVSAIGWLTIILVAFMAWLLAKTAFGRSFYATGDNLQGARQLGVRTEAIRIVAFSLNGCMAALAGIVFASQIGFIPNQTGTGLEMKAIAACVLGGISLLGGSGAIIGAVLGAWFLTQIDSVLVLLRIPAWWNDFIAGLVLLAVLVFDGRLRCALELNLRRQKYARFMTPPPSVKPASSGKKREAA</sequence>
<reference key="1">
    <citation type="journal article" date="2001" name="Nature">
        <title>Genome sequence of enterohaemorrhagic Escherichia coli O157:H7.</title>
        <authorList>
            <person name="Perna N.T."/>
            <person name="Plunkett G. III"/>
            <person name="Burland V."/>
            <person name="Mau B."/>
            <person name="Glasner J.D."/>
            <person name="Rose D.J."/>
            <person name="Mayhew G.F."/>
            <person name="Evans P.S."/>
            <person name="Gregor J."/>
            <person name="Kirkpatrick H.A."/>
            <person name="Posfai G."/>
            <person name="Hackett J."/>
            <person name="Klink S."/>
            <person name="Boutin A."/>
            <person name="Shao Y."/>
            <person name="Miller L."/>
            <person name="Grotbeck E.J."/>
            <person name="Davis N.W."/>
            <person name="Lim A."/>
            <person name="Dimalanta E.T."/>
            <person name="Potamousis K."/>
            <person name="Apodaca J."/>
            <person name="Anantharaman T.S."/>
            <person name="Lin J."/>
            <person name="Yen G."/>
            <person name="Schwartz D.C."/>
            <person name="Welch R.A."/>
            <person name="Blattner F.R."/>
        </authorList>
    </citation>
    <scope>NUCLEOTIDE SEQUENCE [LARGE SCALE GENOMIC DNA]</scope>
    <source>
        <strain>O157:H7 / EDL933 / ATCC 700927 / EHEC</strain>
    </source>
</reference>
<reference key="2">
    <citation type="journal article" date="2001" name="DNA Res.">
        <title>Complete genome sequence of enterohemorrhagic Escherichia coli O157:H7 and genomic comparison with a laboratory strain K-12.</title>
        <authorList>
            <person name="Hayashi T."/>
            <person name="Makino K."/>
            <person name="Ohnishi M."/>
            <person name="Kurokawa K."/>
            <person name="Ishii K."/>
            <person name="Yokoyama K."/>
            <person name="Han C.-G."/>
            <person name="Ohtsubo E."/>
            <person name="Nakayama K."/>
            <person name="Murata T."/>
            <person name="Tanaka M."/>
            <person name="Tobe T."/>
            <person name="Iida T."/>
            <person name="Takami H."/>
            <person name="Honda T."/>
            <person name="Sasakawa C."/>
            <person name="Ogasawara N."/>
            <person name="Yasunaga T."/>
            <person name="Kuhara S."/>
            <person name="Shiba T."/>
            <person name="Hattori M."/>
            <person name="Shinagawa H."/>
        </authorList>
    </citation>
    <scope>NUCLEOTIDE SEQUENCE [LARGE SCALE GENOMIC DNA]</scope>
    <source>
        <strain>O157:H7 / Sakai / RIMD 0509952 / EHEC</strain>
    </source>
</reference>
<organism>
    <name type="scientific">Escherichia coli O157:H7</name>
    <dbReference type="NCBI Taxonomy" id="83334"/>
    <lineage>
        <taxon>Bacteria</taxon>
        <taxon>Pseudomonadati</taxon>
        <taxon>Pseudomonadota</taxon>
        <taxon>Gammaproteobacteria</taxon>
        <taxon>Enterobacterales</taxon>
        <taxon>Enterobacteriaceae</taxon>
        <taxon>Escherichia</taxon>
    </lineage>
</organism>
<keyword id="KW-0997">Cell inner membrane</keyword>
<keyword id="KW-1003">Cell membrane</keyword>
<keyword id="KW-0472">Membrane</keyword>
<keyword id="KW-1185">Reference proteome</keyword>
<keyword id="KW-0812">Transmembrane</keyword>
<keyword id="KW-1133">Transmembrane helix</keyword>
<keyword id="KW-0813">Transport</keyword>
<evidence type="ECO:0000250" key="1"/>
<evidence type="ECO:0000255" key="2"/>
<evidence type="ECO:0000305" key="3"/>
<accession>Q8XAY8</accession>
<accession>Q7ADZ6</accession>
<feature type="chain" id="PRO_0000351340" description="Autoinducer 2 import system permease protein LsrC">
    <location>
        <begin position="1"/>
        <end position="342"/>
    </location>
</feature>
<feature type="topological domain" description="Periplasmic" evidence="2">
    <location>
        <begin position="1"/>
        <end position="13"/>
    </location>
</feature>
<feature type="transmembrane region" description="Helical" evidence="2">
    <location>
        <begin position="14"/>
        <end position="34"/>
    </location>
</feature>
<feature type="topological domain" description="Cytoplasmic" evidence="2">
    <location>
        <begin position="35"/>
        <end position="38"/>
    </location>
</feature>
<feature type="transmembrane region" description="Helical" evidence="2">
    <location>
        <begin position="39"/>
        <end position="59"/>
    </location>
</feature>
<feature type="topological domain" description="Periplasmic" evidence="2">
    <location>
        <begin position="60"/>
        <end position="69"/>
    </location>
</feature>
<feature type="transmembrane region" description="Helical" evidence="2">
    <location>
        <begin position="70"/>
        <end position="90"/>
    </location>
</feature>
<feature type="topological domain" description="Cytoplasmic" evidence="2">
    <location>
        <begin position="91"/>
        <end position="92"/>
    </location>
</feature>
<feature type="transmembrane region" description="Helical" evidence="2">
    <location>
        <begin position="93"/>
        <end position="113"/>
    </location>
</feature>
<feature type="topological domain" description="Periplasmic" evidence="2">
    <location>
        <position position="114"/>
    </location>
</feature>
<feature type="transmembrane region" description="Helical" evidence="2">
    <location>
        <begin position="115"/>
        <end position="135"/>
    </location>
</feature>
<feature type="topological domain" description="Cytoplasmic" evidence="2">
    <location>
        <begin position="136"/>
        <end position="154"/>
    </location>
</feature>
<feature type="transmembrane region" description="Helical" evidence="2">
    <location>
        <begin position="155"/>
        <end position="175"/>
    </location>
</feature>
<feature type="topological domain" description="Periplasmic" evidence="2">
    <location>
        <begin position="176"/>
        <end position="212"/>
    </location>
</feature>
<feature type="transmembrane region" description="Helical" evidence="2">
    <location>
        <begin position="213"/>
        <end position="233"/>
    </location>
</feature>
<feature type="topological domain" description="Cytoplasmic" evidence="2">
    <location>
        <begin position="234"/>
        <end position="251"/>
    </location>
</feature>
<feature type="transmembrane region" description="Helical" evidence="2">
    <location>
        <begin position="252"/>
        <end position="272"/>
    </location>
</feature>
<feature type="topological domain" description="Periplasmic" evidence="2">
    <location>
        <begin position="273"/>
        <end position="283"/>
    </location>
</feature>
<feature type="transmembrane region" description="Helical" evidence="2">
    <location>
        <begin position="284"/>
        <end position="304"/>
    </location>
</feature>
<feature type="topological domain" description="Cytoplasmic" evidence="2">
    <location>
        <begin position="305"/>
        <end position="342"/>
    </location>
</feature>